<protein>
    <recommendedName>
        <fullName>Gallinacin-5</fullName>
        <shortName>Gal-5</shortName>
    </recommendedName>
    <alternativeName>
        <fullName>Beta-defensin 5</fullName>
    </alternativeName>
    <alternativeName>
        <fullName>Gallinacin-9</fullName>
        <shortName>Gal-9</shortName>
    </alternativeName>
</protein>
<sequence>MQILTLLFAVLLLMLRAEPGLSLARGLPQDCERRGGFCSHKSCPPGIGRIGLCSKEDFCCRSRWYS</sequence>
<dbReference type="EMBL" id="AY621307">
    <property type="protein sequence ID" value="AAT45545.1"/>
    <property type="molecule type" value="mRNA"/>
</dbReference>
<dbReference type="EMBL" id="AY621320">
    <property type="protein sequence ID" value="AAT48929.1"/>
    <property type="molecule type" value="Genomic_DNA"/>
</dbReference>
<dbReference type="EMBL" id="AY534897">
    <property type="protein sequence ID" value="AAS99320.1"/>
    <property type="molecule type" value="mRNA"/>
</dbReference>
<dbReference type="EMBL" id="DQ677636">
    <property type="protein sequence ID" value="ABG73370.1"/>
    <property type="molecule type" value="mRNA"/>
</dbReference>
<dbReference type="EMBL" id="DQ858302">
    <property type="protein sequence ID" value="ABI48218.1"/>
    <property type="molecule type" value="mRNA"/>
</dbReference>
<dbReference type="EMBL" id="DQ858315">
    <property type="protein sequence ID" value="ABI48231.1"/>
    <property type="molecule type" value="mRNA"/>
</dbReference>
<dbReference type="EMBL" id="DQ858328">
    <property type="protein sequence ID" value="ABI48244.1"/>
    <property type="molecule type" value="mRNA"/>
</dbReference>
<dbReference type="EMBL" id="DQ858342">
    <property type="protein sequence ID" value="ABI48258.1"/>
    <property type="molecule type" value="mRNA"/>
</dbReference>
<dbReference type="RefSeq" id="NP_001001608.2">
    <property type="nucleotide sequence ID" value="NM_001001608.2"/>
</dbReference>
<dbReference type="FunCoup" id="Q6IV26">
    <property type="interactions" value="17"/>
</dbReference>
<dbReference type="STRING" id="9031.ENSGALP00000045126"/>
<dbReference type="GeneID" id="414340"/>
<dbReference type="KEGG" id="gga:414340"/>
<dbReference type="CTD" id="414340"/>
<dbReference type="VEuPathDB" id="HostDB:geneid_414340"/>
<dbReference type="InParanoid" id="Q6IV26"/>
<dbReference type="OMA" id="CCRSRWY"/>
<dbReference type="OrthoDB" id="9385709at2759"/>
<dbReference type="Reactome" id="R-GGA-1461957">
    <property type="pathway name" value="Beta defensins"/>
</dbReference>
<dbReference type="Reactome" id="R-GGA-1461973">
    <property type="pathway name" value="Defensins"/>
</dbReference>
<dbReference type="PRO" id="PR:Q6IV26"/>
<dbReference type="Proteomes" id="UP000000539">
    <property type="component" value="Chromosome 3"/>
</dbReference>
<dbReference type="Bgee" id="ENSGALG00000042193">
    <property type="expression patterns" value="Expressed in cerebellum and 2 other cell types or tissues"/>
</dbReference>
<dbReference type="GO" id="GO:0005615">
    <property type="term" value="C:extracellular space"/>
    <property type="evidence" value="ECO:0000318"/>
    <property type="project" value="GO_Central"/>
</dbReference>
<dbReference type="GO" id="GO:0031731">
    <property type="term" value="F:CCR6 chemokine receptor binding"/>
    <property type="evidence" value="ECO:0000318"/>
    <property type="project" value="GO_Central"/>
</dbReference>
<dbReference type="GO" id="GO:0042056">
    <property type="term" value="F:chemoattractant activity"/>
    <property type="evidence" value="ECO:0000318"/>
    <property type="project" value="GO_Central"/>
</dbReference>
<dbReference type="GO" id="GO:0060326">
    <property type="term" value="P:cell chemotaxis"/>
    <property type="evidence" value="ECO:0000318"/>
    <property type="project" value="GO_Central"/>
</dbReference>
<dbReference type="GO" id="GO:0042742">
    <property type="term" value="P:defense response to bacterium"/>
    <property type="evidence" value="ECO:0000318"/>
    <property type="project" value="GO_Central"/>
</dbReference>
<dbReference type="Gene3D" id="3.10.360.10">
    <property type="entry name" value="Antimicrobial Peptide, Beta-defensin 2, Chain A"/>
    <property type="match status" value="1"/>
</dbReference>
<dbReference type="InterPro" id="IPR001855">
    <property type="entry name" value="Defensin_beta-like"/>
</dbReference>
<dbReference type="PANTHER" id="PTHR20515">
    <property type="entry name" value="BETA-DEFENSIN"/>
    <property type="match status" value="1"/>
</dbReference>
<dbReference type="PANTHER" id="PTHR20515:SF20">
    <property type="entry name" value="GALLINACIN-1-RELATED"/>
    <property type="match status" value="1"/>
</dbReference>
<dbReference type="Pfam" id="PF00711">
    <property type="entry name" value="Defensin_beta"/>
    <property type="match status" value="1"/>
</dbReference>
<dbReference type="SUPFAM" id="SSF57392">
    <property type="entry name" value="Defensin-like"/>
    <property type="match status" value="1"/>
</dbReference>
<gene>
    <name type="primary">GAL5</name>
</gene>
<organism>
    <name type="scientific">Gallus gallus</name>
    <name type="common">Chicken</name>
    <dbReference type="NCBI Taxonomy" id="9031"/>
    <lineage>
        <taxon>Eukaryota</taxon>
        <taxon>Metazoa</taxon>
        <taxon>Chordata</taxon>
        <taxon>Craniata</taxon>
        <taxon>Vertebrata</taxon>
        <taxon>Euteleostomi</taxon>
        <taxon>Archelosauria</taxon>
        <taxon>Archosauria</taxon>
        <taxon>Dinosauria</taxon>
        <taxon>Saurischia</taxon>
        <taxon>Theropoda</taxon>
        <taxon>Coelurosauria</taxon>
        <taxon>Aves</taxon>
        <taxon>Neognathae</taxon>
        <taxon>Galloanserae</taxon>
        <taxon>Galliformes</taxon>
        <taxon>Phasianidae</taxon>
        <taxon>Phasianinae</taxon>
        <taxon>Gallus</taxon>
    </lineage>
</organism>
<name>GLL5_CHICK</name>
<comment type="function">
    <text evidence="1 6">Has bactericidal activity.</text>
</comment>
<comment type="subcellular location">
    <subcellularLocation>
        <location>Secreted</location>
    </subcellularLocation>
    <subcellularLocation>
        <location evidence="1">Cytoplasmic granule</location>
    </subcellularLocation>
</comment>
<comment type="tissue specificity">
    <text evidence="3 4 5 6">Strong expression in the tongue and bone marrow. Low expression in the esophagus, trachea, lung, brain and ovary. Expressed in the ovarian stroma, but not in the ovarian follicles.</text>
</comment>
<comment type="similarity">
    <text evidence="8">Belongs to the beta-defensin family.</text>
</comment>
<keyword id="KW-0044">Antibiotic</keyword>
<keyword id="KW-0929">Antimicrobial</keyword>
<keyword id="KW-0211">Defensin</keyword>
<keyword id="KW-1015">Disulfide bond</keyword>
<keyword id="KW-1185">Reference proteome</keyword>
<keyword id="KW-0964">Secreted</keyword>
<keyword id="KW-0732">Signal</keyword>
<proteinExistence type="evidence at transcript level"/>
<evidence type="ECO:0000250" key="1"/>
<evidence type="ECO:0000255" key="2"/>
<evidence type="ECO:0000269" key="3">
    <source>
    </source>
</evidence>
<evidence type="ECO:0000269" key="4">
    <source>
    </source>
</evidence>
<evidence type="ECO:0000269" key="5">
    <source>
    </source>
</evidence>
<evidence type="ECO:0000269" key="6">
    <source>
    </source>
</evidence>
<evidence type="ECO:0000269" key="7">
    <source ref="3"/>
</evidence>
<evidence type="ECO:0000305" key="8"/>
<reference key="1">
    <citation type="journal article" date="2004" name="BMC Genomics">
        <title>A genome-wide screen identifies a single beta-defensin gene cluster in the chicken: implications for the origin and evolution of mammalian defensins.</title>
        <authorList>
            <person name="Xiao Y."/>
            <person name="Hughes A.L."/>
            <person name="Ando J."/>
            <person name="Matsuda Y."/>
            <person name="Cheng J.-F."/>
            <person name="Skinner-Noble D."/>
            <person name="Zhang G."/>
        </authorList>
    </citation>
    <scope>NUCLEOTIDE SEQUENCE [GENOMIC DNA / MRNA]</scope>
    <scope>TISSUE SPECIFICITY</scope>
</reference>
<reference key="2">
    <citation type="journal article" date="2004" name="Immunogenetics">
        <title>Bioinformatic discovery and initial characterisation of nine novel antimicrobial peptide genes in the chicken.</title>
        <authorList>
            <person name="Lynn D.J."/>
            <person name="Higgs R."/>
            <person name="Gaines S."/>
            <person name="Tierney J."/>
            <person name="James T."/>
            <person name="Lloyd A.T."/>
            <person name="Fares M.A."/>
            <person name="Mulcahy G."/>
            <person name="O'Farrelly C."/>
        </authorList>
    </citation>
    <scope>NUCLEOTIDE SEQUENCE [MRNA]</scope>
    <scope>TISSUE SPECIFICITY</scope>
    <scope>VARIANT PRO-5</scope>
    <source>
        <tissue>Tongue</tissue>
    </source>
</reference>
<reference key="3">
    <citation type="submission" date="2006-07" db="EMBL/GenBank/DDBJ databases">
        <title>Chicken beta-defensin in China chicken breeds.</title>
        <authorList>
            <person name="Chen Y."/>
            <person name="Cao Y."/>
            <person name="Xie Q."/>
            <person name="Bi Y."/>
            <person name="Chen J."/>
        </authorList>
    </citation>
    <scope>NUCLEOTIDE SEQUENCE [MRNA]</scope>
    <scope>VARIANTS PRO-5; GLY-17; PHE-23 AND ARG-41</scope>
    <source>
        <strain>Guangxi Huang</strain>
        <strain>Huiyang bearded</strain>
        <strain>Qingyuan Ma</strain>
        <strain>Taihe silkies</strain>
        <strain>Xinghua</strain>
    </source>
</reference>
<reference key="4">
    <citation type="journal article" date="2007" name="Biochem. Biophys. Res. Commun.">
        <title>The chicken host peptides, gallinacins 4, 7, and 9 have antimicrobial activity against Salmonella serovars.</title>
        <authorList>
            <person name="Milona P."/>
            <person name="Townes C.L."/>
            <person name="Bevan R.M."/>
            <person name="Hall J."/>
        </authorList>
    </citation>
    <scope>FUNCTION</scope>
    <scope>TISSUE SPECIFICITY</scope>
</reference>
<reference key="5">
    <citation type="journal article" date="2007" name="Reproduction">
        <title>Changes in the expression of gallinacins, antimicrobial peptides, in ovarian follicles during follicular growth and in response to lipopolysaccharide in laying hens (Gallus domesticus).</title>
        <authorList>
            <person name="Subedi K."/>
            <person name="Isobe N."/>
            <person name="Nishibori M."/>
            <person name="Yoshimura Y."/>
        </authorList>
    </citation>
    <scope>TISSUE SPECIFICITY</scope>
</reference>
<feature type="signal peptide" evidence="2">
    <location>
        <begin position="1"/>
        <end position="19"/>
    </location>
</feature>
<feature type="propeptide" id="PRO_0000288562" evidence="1">
    <location>
        <begin position="20"/>
        <end position="25"/>
    </location>
</feature>
<feature type="chain" id="PRO_0000288563" description="Gallinacin-5">
    <location>
        <begin position="26"/>
        <end position="66"/>
    </location>
</feature>
<feature type="disulfide bond" evidence="1">
    <location>
        <begin position="31"/>
        <end position="59"/>
    </location>
</feature>
<feature type="disulfide bond" evidence="1">
    <location>
        <begin position="38"/>
        <end position="53"/>
    </location>
</feature>
<feature type="disulfide bond" evidence="1">
    <location>
        <begin position="43"/>
        <end position="60"/>
    </location>
</feature>
<feature type="sequence variant" description="In strain: Qingyuan Ma." evidence="3 7">
    <original>T</original>
    <variation>P</variation>
    <location>
        <position position="5"/>
    </location>
</feature>
<feature type="sequence variant" description="In strain: Xinghua." evidence="7">
    <original>A</original>
    <variation>G</variation>
    <location>
        <position position="17"/>
    </location>
</feature>
<feature type="sequence variant" description="In strain: Taihe silkies." evidence="7">
    <original>L</original>
    <variation>F</variation>
    <location>
        <position position="23"/>
    </location>
</feature>
<feature type="sequence variant" description="In strain: Taihe silkies." evidence="7">
    <original>K</original>
    <variation>R</variation>
    <location>
        <position position="41"/>
    </location>
</feature>
<accession>Q6IV26</accession>
<accession>Q09MS7</accession>
<accession>Q0PWH0</accession>
<accession>Q6QLQ8</accession>